<proteinExistence type="inferred from homology"/>
<protein>
    <recommendedName>
        <fullName evidence="1">NADH-quinone oxidoreductase subunit K</fullName>
        <ecNumber evidence="1">7.1.1.-</ecNumber>
    </recommendedName>
    <alternativeName>
        <fullName evidence="1">NADH dehydrogenase I subunit K</fullName>
    </alternativeName>
    <alternativeName>
        <fullName evidence="1">NDH-1 subunit K</fullName>
    </alternativeName>
</protein>
<accession>B2U7Q1</accession>
<comment type="function">
    <text evidence="1">NDH-1 shuttles electrons from NADH, via FMN and iron-sulfur (Fe-S) centers, to quinones in the respiratory chain. The immediate electron acceptor for the enzyme in this species is believed to be ubiquinone. Couples the redox reaction to proton translocation (for every two electrons transferred, four hydrogen ions are translocated across the cytoplasmic membrane), and thus conserves the redox energy in a proton gradient.</text>
</comment>
<comment type="catalytic activity">
    <reaction evidence="1">
        <text>a quinone + NADH + 5 H(+)(in) = a quinol + NAD(+) + 4 H(+)(out)</text>
        <dbReference type="Rhea" id="RHEA:57888"/>
        <dbReference type="ChEBI" id="CHEBI:15378"/>
        <dbReference type="ChEBI" id="CHEBI:24646"/>
        <dbReference type="ChEBI" id="CHEBI:57540"/>
        <dbReference type="ChEBI" id="CHEBI:57945"/>
        <dbReference type="ChEBI" id="CHEBI:132124"/>
    </reaction>
</comment>
<comment type="subunit">
    <text evidence="1">NDH-1 is composed of 14 different subunits. Subunits NuoA, H, J, K, L, M, N constitute the membrane sector of the complex.</text>
</comment>
<comment type="subcellular location">
    <subcellularLocation>
        <location evidence="1">Cell inner membrane</location>
        <topology evidence="1">Multi-pass membrane protein</topology>
    </subcellularLocation>
</comment>
<comment type="similarity">
    <text evidence="1">Belongs to the complex I subunit 4L family.</text>
</comment>
<gene>
    <name evidence="1" type="primary">nuoK</name>
    <name type="ordered locus">Rpic_2204</name>
</gene>
<organism>
    <name type="scientific">Ralstonia pickettii (strain 12J)</name>
    <dbReference type="NCBI Taxonomy" id="402626"/>
    <lineage>
        <taxon>Bacteria</taxon>
        <taxon>Pseudomonadati</taxon>
        <taxon>Pseudomonadota</taxon>
        <taxon>Betaproteobacteria</taxon>
        <taxon>Burkholderiales</taxon>
        <taxon>Burkholderiaceae</taxon>
        <taxon>Ralstonia</taxon>
    </lineage>
</organism>
<dbReference type="EC" id="7.1.1.-" evidence="1"/>
<dbReference type="EMBL" id="CP001068">
    <property type="protein sequence ID" value="ACD27338.1"/>
    <property type="molecule type" value="Genomic_DNA"/>
</dbReference>
<dbReference type="SMR" id="B2U7Q1"/>
<dbReference type="STRING" id="402626.Rpic_2204"/>
<dbReference type="KEGG" id="rpi:Rpic_2204"/>
<dbReference type="eggNOG" id="COG0713">
    <property type="taxonomic scope" value="Bacteria"/>
</dbReference>
<dbReference type="HOGENOM" id="CLU_144724_2_0_4"/>
<dbReference type="GO" id="GO:0030964">
    <property type="term" value="C:NADH dehydrogenase complex"/>
    <property type="evidence" value="ECO:0007669"/>
    <property type="project" value="TreeGrafter"/>
</dbReference>
<dbReference type="GO" id="GO:0005886">
    <property type="term" value="C:plasma membrane"/>
    <property type="evidence" value="ECO:0007669"/>
    <property type="project" value="UniProtKB-SubCell"/>
</dbReference>
<dbReference type="GO" id="GO:0050136">
    <property type="term" value="F:NADH:ubiquinone reductase (non-electrogenic) activity"/>
    <property type="evidence" value="ECO:0007669"/>
    <property type="project" value="UniProtKB-UniRule"/>
</dbReference>
<dbReference type="GO" id="GO:0048038">
    <property type="term" value="F:quinone binding"/>
    <property type="evidence" value="ECO:0007669"/>
    <property type="project" value="UniProtKB-KW"/>
</dbReference>
<dbReference type="GO" id="GO:0042773">
    <property type="term" value="P:ATP synthesis coupled electron transport"/>
    <property type="evidence" value="ECO:0007669"/>
    <property type="project" value="InterPro"/>
</dbReference>
<dbReference type="FunFam" id="1.10.287.3510:FF:000001">
    <property type="entry name" value="NADH-quinone oxidoreductase subunit K"/>
    <property type="match status" value="1"/>
</dbReference>
<dbReference type="Gene3D" id="1.10.287.3510">
    <property type="match status" value="1"/>
</dbReference>
<dbReference type="HAMAP" id="MF_01456">
    <property type="entry name" value="NDH1_NuoK"/>
    <property type="match status" value="1"/>
</dbReference>
<dbReference type="InterPro" id="IPR001133">
    <property type="entry name" value="NADH_UbQ_OxRdtase_chain4L/K"/>
</dbReference>
<dbReference type="InterPro" id="IPR039428">
    <property type="entry name" value="NUOK/Mnh_C1-like"/>
</dbReference>
<dbReference type="NCBIfam" id="NF004320">
    <property type="entry name" value="PRK05715.1-2"/>
    <property type="match status" value="1"/>
</dbReference>
<dbReference type="NCBIfam" id="NF004321">
    <property type="entry name" value="PRK05715.1-3"/>
    <property type="match status" value="1"/>
</dbReference>
<dbReference type="NCBIfam" id="NF004323">
    <property type="entry name" value="PRK05715.1-5"/>
    <property type="match status" value="1"/>
</dbReference>
<dbReference type="PANTHER" id="PTHR11434:SF21">
    <property type="entry name" value="NADH DEHYDROGENASE SUBUNIT 4L-RELATED"/>
    <property type="match status" value="1"/>
</dbReference>
<dbReference type="PANTHER" id="PTHR11434">
    <property type="entry name" value="NADH-UBIQUINONE OXIDOREDUCTASE SUBUNIT ND4L"/>
    <property type="match status" value="1"/>
</dbReference>
<dbReference type="Pfam" id="PF00420">
    <property type="entry name" value="Oxidored_q2"/>
    <property type="match status" value="1"/>
</dbReference>
<feature type="chain" id="PRO_0000390185" description="NADH-quinone oxidoreductase subunit K">
    <location>
        <begin position="1"/>
        <end position="103"/>
    </location>
</feature>
<feature type="transmembrane region" description="Helical" evidence="1">
    <location>
        <begin position="6"/>
        <end position="26"/>
    </location>
</feature>
<feature type="transmembrane region" description="Helical" evidence="1">
    <location>
        <begin position="32"/>
        <end position="52"/>
    </location>
</feature>
<feature type="transmembrane region" description="Helical" evidence="1">
    <location>
        <begin position="63"/>
        <end position="83"/>
    </location>
</feature>
<name>NUOK_RALPJ</name>
<keyword id="KW-0997">Cell inner membrane</keyword>
<keyword id="KW-1003">Cell membrane</keyword>
<keyword id="KW-0472">Membrane</keyword>
<keyword id="KW-0520">NAD</keyword>
<keyword id="KW-0874">Quinone</keyword>
<keyword id="KW-1278">Translocase</keyword>
<keyword id="KW-0812">Transmembrane</keyword>
<keyword id="KW-1133">Transmembrane helix</keyword>
<keyword id="KW-0813">Transport</keyword>
<keyword id="KW-0830">Ubiquinone</keyword>
<evidence type="ECO:0000255" key="1">
    <source>
        <dbReference type="HAMAP-Rule" id="MF_01456"/>
    </source>
</evidence>
<reference key="1">
    <citation type="submission" date="2008-05" db="EMBL/GenBank/DDBJ databases">
        <title>Complete sequence of chromosome 1 of Ralstonia pickettii 12J.</title>
        <authorList>
            <person name="Lucas S."/>
            <person name="Copeland A."/>
            <person name="Lapidus A."/>
            <person name="Glavina del Rio T."/>
            <person name="Dalin E."/>
            <person name="Tice H."/>
            <person name="Bruce D."/>
            <person name="Goodwin L."/>
            <person name="Pitluck S."/>
            <person name="Meincke L."/>
            <person name="Brettin T."/>
            <person name="Detter J.C."/>
            <person name="Han C."/>
            <person name="Kuske C.R."/>
            <person name="Schmutz J."/>
            <person name="Larimer F."/>
            <person name="Land M."/>
            <person name="Hauser L."/>
            <person name="Kyrpides N."/>
            <person name="Mikhailova N."/>
            <person name="Marsh T."/>
            <person name="Richardson P."/>
        </authorList>
    </citation>
    <scope>NUCLEOTIDE SEQUENCE [LARGE SCALE GENOMIC DNA]</scope>
    <source>
        <strain>12J</strain>
    </source>
</reference>
<sequence>MSSLSLAHYLVLGAVLFAISIVGIFLNRKNVIVLLMAIELMLLAVNLNFVAFSHYLGDLAGQVFVFFILTVAAAESAIGLAILVVLFRNLDTINVDDLDSLKG</sequence>